<dbReference type="EC" id="2.5.1.145" evidence="1"/>
<dbReference type="EMBL" id="AE017355">
    <property type="protein sequence ID" value="AAT63336.1"/>
    <property type="molecule type" value="Genomic_DNA"/>
</dbReference>
<dbReference type="RefSeq" id="WP_000924246.1">
    <property type="nucleotide sequence ID" value="NC_005957.1"/>
</dbReference>
<dbReference type="RefSeq" id="YP_039149.1">
    <property type="nucleotide sequence ID" value="NC_005957.1"/>
</dbReference>
<dbReference type="SMR" id="Q6HBC7"/>
<dbReference type="KEGG" id="btk:BT9727_4840"/>
<dbReference type="PATRIC" id="fig|281309.8.peg.5146"/>
<dbReference type="HOGENOM" id="CLU_013386_0_1_9"/>
<dbReference type="UniPathway" id="UPA00664"/>
<dbReference type="Proteomes" id="UP000001301">
    <property type="component" value="Chromosome"/>
</dbReference>
<dbReference type="GO" id="GO:0005886">
    <property type="term" value="C:plasma membrane"/>
    <property type="evidence" value="ECO:0007669"/>
    <property type="project" value="UniProtKB-SubCell"/>
</dbReference>
<dbReference type="GO" id="GO:0008961">
    <property type="term" value="F:phosphatidylglycerol-prolipoprotein diacylglyceryl transferase activity"/>
    <property type="evidence" value="ECO:0007669"/>
    <property type="project" value="UniProtKB-UniRule"/>
</dbReference>
<dbReference type="GO" id="GO:0042158">
    <property type="term" value="P:lipoprotein biosynthetic process"/>
    <property type="evidence" value="ECO:0007669"/>
    <property type="project" value="UniProtKB-UniRule"/>
</dbReference>
<dbReference type="HAMAP" id="MF_01147">
    <property type="entry name" value="Lgt"/>
    <property type="match status" value="1"/>
</dbReference>
<dbReference type="InterPro" id="IPR001640">
    <property type="entry name" value="Lgt"/>
</dbReference>
<dbReference type="NCBIfam" id="TIGR00544">
    <property type="entry name" value="lgt"/>
    <property type="match status" value="1"/>
</dbReference>
<dbReference type="PANTHER" id="PTHR30589:SF0">
    <property type="entry name" value="PHOSPHATIDYLGLYCEROL--PROLIPOPROTEIN DIACYLGLYCERYL TRANSFERASE"/>
    <property type="match status" value="1"/>
</dbReference>
<dbReference type="PANTHER" id="PTHR30589">
    <property type="entry name" value="PROLIPOPROTEIN DIACYLGLYCERYL TRANSFERASE"/>
    <property type="match status" value="1"/>
</dbReference>
<dbReference type="Pfam" id="PF01790">
    <property type="entry name" value="LGT"/>
    <property type="match status" value="1"/>
</dbReference>
<dbReference type="PROSITE" id="PS01311">
    <property type="entry name" value="LGT"/>
    <property type="match status" value="1"/>
</dbReference>
<sequence>MLLGSVPQLDRVAVQLGPFPVYWYGIIIGTGVLLGLWLATREGERLGIPKDTFVDLVLIAVPIAILFARMYYVIFEWEYYVQNPSQIINIRQGGLAIHGGLIGAVITGILFAKRRGVSFWKLADIAAPSILLGQAIGRWGNFMNQEAHGDEVTRQFLEGLHLPDFIINQMYIDGVYYHPTFLYESLWNFAGVILLLALRKVNLRRGELFFTYLIWYSIGRFFVEGLRTDSLMLGPLRIAQVMSIGLVVISIIFIIVRRKMGQADKRYSEN</sequence>
<comment type="function">
    <text evidence="1">Catalyzes the transfer of the diacylglyceryl group from phosphatidylglycerol to the sulfhydryl group of the N-terminal cysteine of a prolipoprotein, the first step in the formation of mature lipoproteins.</text>
</comment>
<comment type="catalytic activity">
    <reaction evidence="1">
        <text>L-cysteinyl-[prolipoprotein] + a 1,2-diacyl-sn-glycero-3-phospho-(1'-sn-glycerol) = an S-1,2-diacyl-sn-glyceryl-L-cysteinyl-[prolipoprotein] + sn-glycerol 1-phosphate + H(+)</text>
        <dbReference type="Rhea" id="RHEA:56712"/>
        <dbReference type="Rhea" id="RHEA-COMP:14679"/>
        <dbReference type="Rhea" id="RHEA-COMP:14680"/>
        <dbReference type="ChEBI" id="CHEBI:15378"/>
        <dbReference type="ChEBI" id="CHEBI:29950"/>
        <dbReference type="ChEBI" id="CHEBI:57685"/>
        <dbReference type="ChEBI" id="CHEBI:64716"/>
        <dbReference type="ChEBI" id="CHEBI:140658"/>
        <dbReference type="EC" id="2.5.1.145"/>
    </reaction>
</comment>
<comment type="pathway">
    <text evidence="1">Protein modification; lipoprotein biosynthesis (diacylglyceryl transfer).</text>
</comment>
<comment type="subcellular location">
    <subcellularLocation>
        <location evidence="1">Cell membrane</location>
        <topology evidence="1">Multi-pass membrane protein</topology>
    </subcellularLocation>
</comment>
<comment type="similarity">
    <text evidence="1">Belongs to the Lgt family.</text>
</comment>
<name>LGT_BACHK</name>
<gene>
    <name evidence="1" type="primary">lgt</name>
    <name type="ordered locus">BT9727_4840</name>
</gene>
<protein>
    <recommendedName>
        <fullName evidence="1">Phosphatidylglycerol--prolipoprotein diacylglyceryl transferase</fullName>
        <ecNumber evidence="1">2.5.1.145</ecNumber>
    </recommendedName>
</protein>
<feature type="chain" id="PRO_0000172553" description="Phosphatidylglycerol--prolipoprotein diacylglyceryl transferase">
    <location>
        <begin position="1"/>
        <end position="270"/>
    </location>
</feature>
<feature type="transmembrane region" description="Helical" evidence="1">
    <location>
        <begin position="19"/>
        <end position="39"/>
    </location>
</feature>
<feature type="transmembrane region" description="Helical" evidence="1">
    <location>
        <begin position="56"/>
        <end position="76"/>
    </location>
</feature>
<feature type="transmembrane region" description="Helical" evidence="1">
    <location>
        <begin position="92"/>
        <end position="112"/>
    </location>
</feature>
<feature type="transmembrane region" description="Helical" evidence="1">
    <location>
        <begin position="116"/>
        <end position="136"/>
    </location>
</feature>
<feature type="transmembrane region" description="Helical" evidence="1">
    <location>
        <begin position="178"/>
        <end position="198"/>
    </location>
</feature>
<feature type="transmembrane region" description="Helical" evidence="1">
    <location>
        <begin position="206"/>
        <end position="226"/>
    </location>
</feature>
<feature type="transmembrane region" description="Helical" evidence="1">
    <location>
        <begin position="236"/>
        <end position="256"/>
    </location>
</feature>
<feature type="binding site" evidence="1">
    <location>
        <position position="138"/>
    </location>
    <ligand>
        <name>a 1,2-diacyl-sn-glycero-3-phospho-(1'-sn-glycerol)</name>
        <dbReference type="ChEBI" id="CHEBI:64716"/>
    </ligand>
</feature>
<reference key="1">
    <citation type="journal article" date="2006" name="J. Bacteriol.">
        <title>Pathogenomic sequence analysis of Bacillus cereus and Bacillus thuringiensis isolates closely related to Bacillus anthracis.</title>
        <authorList>
            <person name="Han C.S."/>
            <person name="Xie G."/>
            <person name="Challacombe J.F."/>
            <person name="Altherr M.R."/>
            <person name="Bhotika S.S."/>
            <person name="Bruce D."/>
            <person name="Campbell C.S."/>
            <person name="Campbell M.L."/>
            <person name="Chen J."/>
            <person name="Chertkov O."/>
            <person name="Cleland C."/>
            <person name="Dimitrijevic M."/>
            <person name="Doggett N.A."/>
            <person name="Fawcett J.J."/>
            <person name="Glavina T."/>
            <person name="Goodwin L.A."/>
            <person name="Hill K.K."/>
            <person name="Hitchcock P."/>
            <person name="Jackson P.J."/>
            <person name="Keim P."/>
            <person name="Kewalramani A.R."/>
            <person name="Longmire J."/>
            <person name="Lucas S."/>
            <person name="Malfatti S."/>
            <person name="McMurry K."/>
            <person name="Meincke L.J."/>
            <person name="Misra M."/>
            <person name="Moseman B.L."/>
            <person name="Mundt M."/>
            <person name="Munk A.C."/>
            <person name="Okinaka R.T."/>
            <person name="Parson-Quintana B."/>
            <person name="Reilly L.P."/>
            <person name="Richardson P."/>
            <person name="Robinson D.L."/>
            <person name="Rubin E."/>
            <person name="Saunders E."/>
            <person name="Tapia R."/>
            <person name="Tesmer J.G."/>
            <person name="Thayer N."/>
            <person name="Thompson L.S."/>
            <person name="Tice H."/>
            <person name="Ticknor L.O."/>
            <person name="Wills P.L."/>
            <person name="Brettin T.S."/>
            <person name="Gilna P."/>
        </authorList>
    </citation>
    <scope>NUCLEOTIDE SEQUENCE [LARGE SCALE GENOMIC DNA]</scope>
    <source>
        <strain>97-27</strain>
    </source>
</reference>
<organism>
    <name type="scientific">Bacillus thuringiensis subsp. konkukian (strain 97-27)</name>
    <dbReference type="NCBI Taxonomy" id="281309"/>
    <lineage>
        <taxon>Bacteria</taxon>
        <taxon>Bacillati</taxon>
        <taxon>Bacillota</taxon>
        <taxon>Bacilli</taxon>
        <taxon>Bacillales</taxon>
        <taxon>Bacillaceae</taxon>
        <taxon>Bacillus</taxon>
        <taxon>Bacillus cereus group</taxon>
    </lineage>
</organism>
<proteinExistence type="inferred from homology"/>
<keyword id="KW-1003">Cell membrane</keyword>
<keyword id="KW-0472">Membrane</keyword>
<keyword id="KW-0808">Transferase</keyword>
<keyword id="KW-0812">Transmembrane</keyword>
<keyword id="KW-1133">Transmembrane helix</keyword>
<evidence type="ECO:0000255" key="1">
    <source>
        <dbReference type="HAMAP-Rule" id="MF_01147"/>
    </source>
</evidence>
<accession>Q6HBC7</accession>